<feature type="signal peptide" evidence="2">
    <location>
        <begin position="1"/>
        <end position="20"/>
    </location>
</feature>
<feature type="propeptide" id="PRO_0000380147" evidence="1">
    <location>
        <begin position="21"/>
        <end position="60"/>
    </location>
</feature>
<feature type="chain" id="PRO_0000380148" description="M-zodatoxin-Lt8o">
    <location>
        <begin position="61"/>
        <end position="131"/>
    </location>
</feature>
<keyword id="KW-0044">Antibiotic</keyword>
<keyword id="KW-0929">Antimicrobial</keyword>
<keyword id="KW-0204">Cytolysis</keyword>
<keyword id="KW-0354">Hemolysis</keyword>
<keyword id="KW-0964">Secreted</keyword>
<keyword id="KW-0732">Signal</keyword>
<keyword id="KW-0800">Toxin</keyword>
<comment type="function">
    <text evidence="1">Insecticidal, cytolytic and antimicrobial peptide. Forms voltage-dependent, ion-permeable channels in membranes. At high concentration causes cell membrane lysis (By similarity).</text>
</comment>
<comment type="subcellular location">
    <subcellularLocation>
        <location evidence="1">Secreted</location>
    </subcellularLocation>
</comment>
<comment type="tissue specificity">
    <text>Expressed by the venom gland.</text>
</comment>
<comment type="similarity">
    <text evidence="3">Belongs to the cationic peptide 06 (cytoinsectotoxin) family.</text>
</comment>
<sequence length="131" mass="14952">MKYFVVALALVAAFACIAESKPAESEHELAEVEEENELADLEDAVWLEHLADLSDLEEARGFFGNTWKKIKGKADKIMLKKAVKIMVKKEGISKEEAQAKVDAMSKKQIRLYLLKYYGKKLFKKRPKNCDQ</sequence>
<proteinExistence type="evidence at transcript level"/>
<reference key="1">
    <citation type="journal article" date="2008" name="Biochem. J.">
        <title>Cyto-insectotoxins, a novel class of cytolytic and insecticidal peptides from spider venom.</title>
        <authorList>
            <person name="Vassilevski A.A."/>
            <person name="Kozlov S.A."/>
            <person name="Samsonova O.V."/>
            <person name="Egorova N.S."/>
            <person name="Karpunin D.V."/>
            <person name="Pluzhnikov K.A."/>
            <person name="Feofanov A.V."/>
            <person name="Grishin E.V."/>
        </authorList>
    </citation>
    <scope>NUCLEOTIDE SEQUENCE [MRNA]</scope>
    <source>
        <tissue>Venom gland</tissue>
    </source>
</reference>
<name>CT114_LACTA</name>
<protein>
    <recommendedName>
        <fullName>M-zodatoxin-Lt8o</fullName>
        <shortName>M-ZDTX-Lt8o</shortName>
    </recommendedName>
    <alternativeName>
        <fullName>Cytoinsectotoxin 1-14</fullName>
    </alternativeName>
</protein>
<accession>P0CAZ7</accession>
<organism>
    <name type="scientific">Lachesana tarabaevi</name>
    <name type="common">Spider</name>
    <dbReference type="NCBI Taxonomy" id="379576"/>
    <lineage>
        <taxon>Eukaryota</taxon>
        <taxon>Metazoa</taxon>
        <taxon>Ecdysozoa</taxon>
        <taxon>Arthropoda</taxon>
        <taxon>Chelicerata</taxon>
        <taxon>Arachnida</taxon>
        <taxon>Araneae</taxon>
        <taxon>Araneomorphae</taxon>
        <taxon>Entelegynae</taxon>
        <taxon>Entelegynae incertae sedis</taxon>
        <taxon>Zodariidae</taxon>
        <taxon>Lachesana</taxon>
    </lineage>
</organism>
<dbReference type="SMR" id="P0CAZ7"/>
<dbReference type="ArachnoServer" id="AS000768">
    <property type="toxin name" value="M-zodatoxin-Lt8o"/>
</dbReference>
<dbReference type="GO" id="GO:0005576">
    <property type="term" value="C:extracellular region"/>
    <property type="evidence" value="ECO:0007669"/>
    <property type="project" value="UniProtKB-SubCell"/>
</dbReference>
<dbReference type="GO" id="GO:0090729">
    <property type="term" value="F:toxin activity"/>
    <property type="evidence" value="ECO:0007669"/>
    <property type="project" value="UniProtKB-KW"/>
</dbReference>
<dbReference type="GO" id="GO:0042742">
    <property type="term" value="P:defense response to bacterium"/>
    <property type="evidence" value="ECO:0007669"/>
    <property type="project" value="UniProtKB-KW"/>
</dbReference>
<dbReference type="GO" id="GO:0031640">
    <property type="term" value="P:killing of cells of another organism"/>
    <property type="evidence" value="ECO:0007669"/>
    <property type="project" value="UniProtKB-KW"/>
</dbReference>
<dbReference type="InterPro" id="IPR018802">
    <property type="entry name" value="Latarcin_precursor"/>
</dbReference>
<dbReference type="Pfam" id="PF10279">
    <property type="entry name" value="Latarcin"/>
    <property type="match status" value="1"/>
</dbReference>
<gene>
    <name type="primary">cit 1-14</name>
</gene>
<evidence type="ECO:0000250" key="1"/>
<evidence type="ECO:0000255" key="2"/>
<evidence type="ECO:0000305" key="3"/>